<gene>
    <name type="primary">csd</name>
    <name type="ordered locus">SACOL0916</name>
</gene>
<keyword id="KW-0663">Pyridoxal phosphate</keyword>
<keyword id="KW-0808">Transferase</keyword>
<protein>
    <recommendedName>
        <fullName>Probable cysteine desulfurase</fullName>
        <ecNumber>2.8.1.7</ecNumber>
    </recommendedName>
</protein>
<dbReference type="EC" id="2.8.1.7"/>
<dbReference type="EMBL" id="CP000046">
    <property type="protein sequence ID" value="AAW37886.1"/>
    <property type="molecule type" value="Genomic_DNA"/>
</dbReference>
<dbReference type="SMR" id="Q5HHH0"/>
<dbReference type="KEGG" id="sac:SACOL0916"/>
<dbReference type="HOGENOM" id="CLU_003433_2_5_9"/>
<dbReference type="Proteomes" id="UP000000530">
    <property type="component" value="Chromosome"/>
</dbReference>
<dbReference type="GO" id="GO:0031071">
    <property type="term" value="F:cysteine desulfurase activity"/>
    <property type="evidence" value="ECO:0007669"/>
    <property type="project" value="UniProtKB-EC"/>
</dbReference>
<dbReference type="GO" id="GO:0030170">
    <property type="term" value="F:pyridoxal phosphate binding"/>
    <property type="evidence" value="ECO:0007669"/>
    <property type="project" value="InterPro"/>
</dbReference>
<dbReference type="GO" id="GO:0006534">
    <property type="term" value="P:cysteine metabolic process"/>
    <property type="evidence" value="ECO:0007669"/>
    <property type="project" value="InterPro"/>
</dbReference>
<dbReference type="CDD" id="cd06453">
    <property type="entry name" value="SufS_like"/>
    <property type="match status" value="1"/>
</dbReference>
<dbReference type="Gene3D" id="3.90.1150.10">
    <property type="entry name" value="Aspartate Aminotransferase, domain 1"/>
    <property type="match status" value="1"/>
</dbReference>
<dbReference type="Gene3D" id="3.40.640.10">
    <property type="entry name" value="Type I PLP-dependent aspartate aminotransferase-like (Major domain)"/>
    <property type="match status" value="1"/>
</dbReference>
<dbReference type="InterPro" id="IPR000192">
    <property type="entry name" value="Aminotrans_V_dom"/>
</dbReference>
<dbReference type="InterPro" id="IPR010970">
    <property type="entry name" value="Cys_dSase_SufS"/>
</dbReference>
<dbReference type="InterPro" id="IPR016454">
    <property type="entry name" value="Cysteine_dSase"/>
</dbReference>
<dbReference type="InterPro" id="IPR015424">
    <property type="entry name" value="PyrdxlP-dep_Trfase"/>
</dbReference>
<dbReference type="InterPro" id="IPR015421">
    <property type="entry name" value="PyrdxlP-dep_Trfase_major"/>
</dbReference>
<dbReference type="InterPro" id="IPR015422">
    <property type="entry name" value="PyrdxlP-dep_Trfase_small"/>
</dbReference>
<dbReference type="NCBIfam" id="TIGR01979">
    <property type="entry name" value="sufS"/>
    <property type="match status" value="1"/>
</dbReference>
<dbReference type="PANTHER" id="PTHR43586">
    <property type="entry name" value="CYSTEINE DESULFURASE"/>
    <property type="match status" value="1"/>
</dbReference>
<dbReference type="PANTHER" id="PTHR43586:SF8">
    <property type="entry name" value="CYSTEINE DESULFURASE 1, CHLOROPLASTIC"/>
    <property type="match status" value="1"/>
</dbReference>
<dbReference type="Pfam" id="PF00266">
    <property type="entry name" value="Aminotran_5"/>
    <property type="match status" value="1"/>
</dbReference>
<dbReference type="PIRSF" id="PIRSF005572">
    <property type="entry name" value="NifS"/>
    <property type="match status" value="1"/>
</dbReference>
<dbReference type="SUPFAM" id="SSF53383">
    <property type="entry name" value="PLP-dependent transferases"/>
    <property type="match status" value="1"/>
</dbReference>
<feature type="chain" id="PRO_0000150309" description="Probable cysteine desulfurase">
    <location>
        <begin position="1"/>
        <end position="413"/>
    </location>
</feature>
<feature type="active site" description="Cysteine persulfide intermediate" evidence="1">
    <location>
        <position position="368"/>
    </location>
</feature>
<feature type="modified residue" description="N6-(pyridoxal phosphate)lysine" evidence="1">
    <location>
        <position position="229"/>
    </location>
</feature>
<proteinExistence type="inferred from homology"/>
<sequence>MAEHSFDVNEVIKDFPILDQKVNGKRLAYLDSTATSQTPVQVLNVLEDYYKRYNSNVHRGVHTLGSLATDGYENARETVRRFINAKYFEEIIFTRGTTASINLVAHSYGDANVEEGDEIVVTEMEHHANIVPWQQLAKRKNATLKFIPMTADGELNIEDIKQTINDKTKIVAIAHISNVLGTINDVKTIAEIAHQHGAIISVDGAQAAPHMKLDMQEMNADFYSFSGHKMLGPTGIGVLFGKRELLQKMEPIEFGGDMIDFVSKYDATWADLPTKFEAGTPLIAQAIGLAEAIRYLERIGFDAIHKYEQELTIYAYEQMSAIEGIEIYGPPKDRRAGVITFNLQDVHPHDVATAVDTEGVAVRAGHHCAQPLMKWLNVSSTARASFYIYNTKEDVDQLINALKQTKEFFSYEF</sequence>
<evidence type="ECO:0000250" key="1"/>
<evidence type="ECO:0000305" key="2"/>
<accession>Q5HHH0</accession>
<reference key="1">
    <citation type="journal article" date="2005" name="J. Bacteriol.">
        <title>Insights on evolution of virulence and resistance from the complete genome analysis of an early methicillin-resistant Staphylococcus aureus strain and a biofilm-producing methicillin-resistant Staphylococcus epidermidis strain.</title>
        <authorList>
            <person name="Gill S.R."/>
            <person name="Fouts D.E."/>
            <person name="Archer G.L."/>
            <person name="Mongodin E.F."/>
            <person name="DeBoy R.T."/>
            <person name="Ravel J."/>
            <person name="Paulsen I.T."/>
            <person name="Kolonay J.F."/>
            <person name="Brinkac L.M."/>
            <person name="Beanan M.J."/>
            <person name="Dodson R.J."/>
            <person name="Daugherty S.C."/>
            <person name="Madupu R."/>
            <person name="Angiuoli S.V."/>
            <person name="Durkin A.S."/>
            <person name="Haft D.H."/>
            <person name="Vamathevan J.J."/>
            <person name="Khouri H."/>
            <person name="Utterback T.R."/>
            <person name="Lee C."/>
            <person name="Dimitrov G."/>
            <person name="Jiang L."/>
            <person name="Qin H."/>
            <person name="Weidman J."/>
            <person name="Tran K."/>
            <person name="Kang K.H."/>
            <person name="Hance I.R."/>
            <person name="Nelson K.E."/>
            <person name="Fraser C.M."/>
        </authorList>
    </citation>
    <scope>NUCLEOTIDE SEQUENCE [LARGE SCALE GENOMIC DNA]</scope>
    <source>
        <strain>COL</strain>
    </source>
</reference>
<organism>
    <name type="scientific">Staphylococcus aureus (strain COL)</name>
    <dbReference type="NCBI Taxonomy" id="93062"/>
    <lineage>
        <taxon>Bacteria</taxon>
        <taxon>Bacillati</taxon>
        <taxon>Bacillota</taxon>
        <taxon>Bacilli</taxon>
        <taxon>Bacillales</taxon>
        <taxon>Staphylococcaceae</taxon>
        <taxon>Staphylococcus</taxon>
    </lineage>
</organism>
<name>CSD_STAAC</name>
<comment type="function">
    <text evidence="1">Catalyzes the removal of elemental sulfur and selenium atoms from L-cysteine, L-cystine, L-selenocysteine, and L-selenocystine to produce L-alanine.</text>
</comment>
<comment type="catalytic activity">
    <reaction>
        <text>(sulfur carrier)-H + L-cysteine = (sulfur carrier)-SH + L-alanine</text>
        <dbReference type="Rhea" id="RHEA:43892"/>
        <dbReference type="Rhea" id="RHEA-COMP:14737"/>
        <dbReference type="Rhea" id="RHEA-COMP:14739"/>
        <dbReference type="ChEBI" id="CHEBI:29917"/>
        <dbReference type="ChEBI" id="CHEBI:35235"/>
        <dbReference type="ChEBI" id="CHEBI:57972"/>
        <dbReference type="ChEBI" id="CHEBI:64428"/>
        <dbReference type="EC" id="2.8.1.7"/>
    </reaction>
</comment>
<comment type="cofactor">
    <cofactor evidence="1">
        <name>pyridoxal 5'-phosphate</name>
        <dbReference type="ChEBI" id="CHEBI:597326"/>
    </cofactor>
</comment>
<comment type="similarity">
    <text evidence="2">Belongs to the class-V pyridoxal-phosphate-dependent aminotransferase family. Csd subfamily.</text>
</comment>